<accession>C5DBV2</accession>
<name>BBP1_LACTC</name>
<gene>
    <name type="primary">BBP1</name>
    <name type="ordered locus">KLTH0A05588g</name>
</gene>
<comment type="function">
    <text evidence="1">Component of the spindle pole body (SPB) required for insertion of the nascent SPB into the nuclear envelope and for the proper execution of spindle pole body (SPB) duplication. Connects the central plaque of the SPB with the half-bridge. Required for proper localization of CDC5 at the SPB and for proper M-phase progression (By similarity).</text>
</comment>
<comment type="subunit">
    <text evidence="1">Homodimer.</text>
</comment>
<comment type="subcellular location">
    <subcellularLocation>
        <location evidence="1">Cytoplasm</location>
        <location evidence="1">Cytoskeleton</location>
        <location evidence="1">Microtubule organizing center</location>
        <location evidence="1">Spindle pole body</location>
    </subcellularLocation>
    <text evidence="1">Associates with the periphary of the central plaque.</text>
</comment>
<comment type="similarity">
    <text evidence="4">Belongs to the BBP1 family.</text>
</comment>
<protein>
    <recommendedName>
        <fullName>Spindle pole component BBP1</fullName>
    </recommendedName>
</protein>
<proteinExistence type="inferred from homology"/>
<keyword id="KW-0175">Coiled coil</keyword>
<keyword id="KW-0963">Cytoplasm</keyword>
<keyword id="KW-0206">Cytoskeleton</keyword>
<keyword id="KW-1185">Reference proteome</keyword>
<sequence>MIWNNDDTEHSTGGLYRWTMDALFGRQISPSRKFKEVSQDDTNYNMKSHKDKQWDGHGFQPRTRSSSASFDRSFLQRYELLQDEEEQDIMRPVRSPARPYLSAGHAAGQDAALANDESTDTFSNKRQRFKGKFSGPKYHDESLKFRAPAKNDPFISKLFQRESPEHPSNLPGKFPSPFKQALGLPAGVQVQLDPEEQIPQKMFTDEYLQLLAELDQNGQKLKQLQQGLHQKQQDHILQETSYREKYHVMRQELITELKQSKKLYDNYYRLYEKHKKMRALDTDASRLRQRISDLEAQVVDASIEKAEEVRKLNETIFQLEFREQETQSKHERERIRYQSRIAELESIVESRLSISNGVQNPPLRERIKPVNSSARI</sequence>
<dbReference type="EMBL" id="CU928165">
    <property type="protein sequence ID" value="CAR21259.1"/>
    <property type="molecule type" value="Genomic_DNA"/>
</dbReference>
<dbReference type="RefSeq" id="XP_002551701.1">
    <property type="nucleotide sequence ID" value="XM_002551655.1"/>
</dbReference>
<dbReference type="SMR" id="C5DBV2"/>
<dbReference type="FunCoup" id="C5DBV2">
    <property type="interactions" value="134"/>
</dbReference>
<dbReference type="STRING" id="559295.C5DBV2"/>
<dbReference type="GeneID" id="8290505"/>
<dbReference type="KEGG" id="lth:KLTH0A05588g"/>
<dbReference type="eggNOG" id="ENOG502RYZ2">
    <property type="taxonomic scope" value="Eukaryota"/>
</dbReference>
<dbReference type="HOGENOM" id="CLU_711875_0_0_1"/>
<dbReference type="InParanoid" id="C5DBV2"/>
<dbReference type="OMA" id="WTMDALF"/>
<dbReference type="OrthoDB" id="4042536at2759"/>
<dbReference type="Proteomes" id="UP000002036">
    <property type="component" value="Chromosome A"/>
</dbReference>
<dbReference type="GO" id="GO:0005737">
    <property type="term" value="C:cytoplasm"/>
    <property type="evidence" value="ECO:0007669"/>
    <property type="project" value="UniProtKB-KW"/>
</dbReference>
<dbReference type="GO" id="GO:0005816">
    <property type="term" value="C:spindle pole body"/>
    <property type="evidence" value="ECO:0007669"/>
    <property type="project" value="UniProtKB-SubCell"/>
</dbReference>
<dbReference type="InterPro" id="IPR029330">
    <property type="entry name" value="Bbp1_C"/>
</dbReference>
<dbReference type="InterPro" id="IPR029328">
    <property type="entry name" value="Bbp1_N"/>
</dbReference>
<dbReference type="Pfam" id="PF15272">
    <property type="entry name" value="BBP1_C"/>
    <property type="match status" value="1"/>
</dbReference>
<dbReference type="Pfam" id="PF15271">
    <property type="entry name" value="BBP1_N"/>
    <property type="match status" value="1"/>
</dbReference>
<feature type="chain" id="PRO_0000409173" description="Spindle pole component BBP1">
    <location>
        <begin position="1"/>
        <end position="376"/>
    </location>
</feature>
<feature type="region of interest" description="Disordered" evidence="3">
    <location>
        <begin position="34"/>
        <end position="67"/>
    </location>
</feature>
<feature type="region of interest" description="Disordered" evidence="3">
    <location>
        <begin position="103"/>
        <end position="134"/>
    </location>
</feature>
<feature type="coiled-coil region" evidence="2">
    <location>
        <begin position="204"/>
        <end position="350"/>
    </location>
</feature>
<feature type="compositionally biased region" description="Low complexity" evidence="3">
    <location>
        <begin position="103"/>
        <end position="114"/>
    </location>
</feature>
<reference key="1">
    <citation type="journal article" date="2009" name="Genome Res.">
        <title>Comparative genomics of protoploid Saccharomycetaceae.</title>
        <authorList>
            <consortium name="The Genolevures Consortium"/>
            <person name="Souciet J.-L."/>
            <person name="Dujon B."/>
            <person name="Gaillardin C."/>
            <person name="Johnston M."/>
            <person name="Baret P.V."/>
            <person name="Cliften P."/>
            <person name="Sherman D.J."/>
            <person name="Weissenbach J."/>
            <person name="Westhof E."/>
            <person name="Wincker P."/>
            <person name="Jubin C."/>
            <person name="Poulain J."/>
            <person name="Barbe V."/>
            <person name="Segurens B."/>
            <person name="Artiguenave F."/>
            <person name="Anthouard V."/>
            <person name="Vacherie B."/>
            <person name="Val M.-E."/>
            <person name="Fulton R.S."/>
            <person name="Minx P."/>
            <person name="Wilson R."/>
            <person name="Durrens P."/>
            <person name="Jean G."/>
            <person name="Marck C."/>
            <person name="Martin T."/>
            <person name="Nikolski M."/>
            <person name="Rolland T."/>
            <person name="Seret M.-L."/>
            <person name="Casaregola S."/>
            <person name="Despons L."/>
            <person name="Fairhead C."/>
            <person name="Fischer G."/>
            <person name="Lafontaine I."/>
            <person name="Leh V."/>
            <person name="Lemaire M."/>
            <person name="de Montigny J."/>
            <person name="Neuveglise C."/>
            <person name="Thierry A."/>
            <person name="Blanc-Lenfle I."/>
            <person name="Bleykasten C."/>
            <person name="Diffels J."/>
            <person name="Fritsch E."/>
            <person name="Frangeul L."/>
            <person name="Goeffon A."/>
            <person name="Jauniaux N."/>
            <person name="Kachouri-Lafond R."/>
            <person name="Payen C."/>
            <person name="Potier S."/>
            <person name="Pribylova L."/>
            <person name="Ozanne C."/>
            <person name="Richard G.-F."/>
            <person name="Sacerdot C."/>
            <person name="Straub M.-L."/>
            <person name="Talla E."/>
        </authorList>
    </citation>
    <scope>NUCLEOTIDE SEQUENCE [LARGE SCALE GENOMIC DNA]</scope>
    <source>
        <strain>ATCC 56472 / CBS 6340 / NRRL Y-8284</strain>
    </source>
</reference>
<evidence type="ECO:0000250" key="1"/>
<evidence type="ECO:0000255" key="2"/>
<evidence type="ECO:0000256" key="3">
    <source>
        <dbReference type="SAM" id="MobiDB-lite"/>
    </source>
</evidence>
<evidence type="ECO:0000305" key="4"/>
<organism>
    <name type="scientific">Lachancea thermotolerans (strain ATCC 56472 / CBS 6340 / NRRL Y-8284)</name>
    <name type="common">Yeast</name>
    <name type="synonym">Kluyveromyces thermotolerans</name>
    <dbReference type="NCBI Taxonomy" id="559295"/>
    <lineage>
        <taxon>Eukaryota</taxon>
        <taxon>Fungi</taxon>
        <taxon>Dikarya</taxon>
        <taxon>Ascomycota</taxon>
        <taxon>Saccharomycotina</taxon>
        <taxon>Saccharomycetes</taxon>
        <taxon>Saccharomycetales</taxon>
        <taxon>Saccharomycetaceae</taxon>
        <taxon>Lachancea</taxon>
    </lineage>
</organism>